<feature type="chain" id="PRO_1000040471" description="6,7-dimethyl-8-ribityllumazine synthase">
    <location>
        <begin position="1"/>
        <end position="156"/>
    </location>
</feature>
<feature type="active site" description="Proton donor" evidence="1">
    <location>
        <position position="88"/>
    </location>
</feature>
<feature type="binding site" evidence="1">
    <location>
        <position position="22"/>
    </location>
    <ligand>
        <name>5-amino-6-(D-ribitylamino)uracil</name>
        <dbReference type="ChEBI" id="CHEBI:15934"/>
    </ligand>
</feature>
<feature type="binding site" evidence="1">
    <location>
        <begin position="56"/>
        <end position="58"/>
    </location>
    <ligand>
        <name>5-amino-6-(D-ribitylamino)uracil</name>
        <dbReference type="ChEBI" id="CHEBI:15934"/>
    </ligand>
</feature>
<feature type="binding site" evidence="1">
    <location>
        <begin position="80"/>
        <end position="82"/>
    </location>
    <ligand>
        <name>5-amino-6-(D-ribitylamino)uracil</name>
        <dbReference type="ChEBI" id="CHEBI:15934"/>
    </ligand>
</feature>
<feature type="binding site" evidence="1">
    <location>
        <begin position="85"/>
        <end position="86"/>
    </location>
    <ligand>
        <name>(2S)-2-hydroxy-3-oxobutyl phosphate</name>
        <dbReference type="ChEBI" id="CHEBI:58830"/>
    </ligand>
</feature>
<feature type="binding site" evidence="1">
    <location>
        <position position="113"/>
    </location>
    <ligand>
        <name>5-amino-6-(D-ribitylamino)uracil</name>
        <dbReference type="ChEBI" id="CHEBI:15934"/>
    </ligand>
</feature>
<feature type="binding site" evidence="1">
    <location>
        <position position="127"/>
    </location>
    <ligand>
        <name>(2S)-2-hydroxy-3-oxobutyl phosphate</name>
        <dbReference type="ChEBI" id="CHEBI:58830"/>
    </ligand>
</feature>
<evidence type="ECO:0000255" key="1">
    <source>
        <dbReference type="HAMAP-Rule" id="MF_00178"/>
    </source>
</evidence>
<accession>Q03D86</accession>
<reference key="1">
    <citation type="journal article" date="2006" name="Proc. Natl. Acad. Sci. U.S.A.">
        <title>Comparative genomics of the lactic acid bacteria.</title>
        <authorList>
            <person name="Makarova K.S."/>
            <person name="Slesarev A."/>
            <person name="Wolf Y.I."/>
            <person name="Sorokin A."/>
            <person name="Mirkin B."/>
            <person name="Koonin E.V."/>
            <person name="Pavlov A."/>
            <person name="Pavlova N."/>
            <person name="Karamychev V."/>
            <person name="Polouchine N."/>
            <person name="Shakhova V."/>
            <person name="Grigoriev I."/>
            <person name="Lou Y."/>
            <person name="Rohksar D."/>
            <person name="Lucas S."/>
            <person name="Huang K."/>
            <person name="Goodstein D.M."/>
            <person name="Hawkins T."/>
            <person name="Plengvidhya V."/>
            <person name="Welker D."/>
            <person name="Hughes J."/>
            <person name="Goh Y."/>
            <person name="Benson A."/>
            <person name="Baldwin K."/>
            <person name="Lee J.-H."/>
            <person name="Diaz-Muniz I."/>
            <person name="Dosti B."/>
            <person name="Smeianov V."/>
            <person name="Wechter W."/>
            <person name="Barabote R."/>
            <person name="Lorca G."/>
            <person name="Altermann E."/>
            <person name="Barrangou R."/>
            <person name="Ganesan B."/>
            <person name="Xie Y."/>
            <person name="Rawsthorne H."/>
            <person name="Tamir D."/>
            <person name="Parker C."/>
            <person name="Breidt F."/>
            <person name="Broadbent J.R."/>
            <person name="Hutkins R."/>
            <person name="O'Sullivan D."/>
            <person name="Steele J."/>
            <person name="Unlu G."/>
            <person name="Saier M.H. Jr."/>
            <person name="Klaenhammer T."/>
            <person name="Richardson P."/>
            <person name="Kozyavkin S."/>
            <person name="Weimer B.C."/>
            <person name="Mills D.A."/>
        </authorList>
    </citation>
    <scope>NUCLEOTIDE SEQUENCE [LARGE SCALE GENOMIC DNA]</scope>
    <source>
        <strain>ATCC 25745 / CCUG 21536 / LMG 10740 / 183-1w</strain>
    </source>
</reference>
<keyword id="KW-0686">Riboflavin biosynthesis</keyword>
<keyword id="KW-0808">Transferase</keyword>
<dbReference type="EC" id="2.5.1.78" evidence="1"/>
<dbReference type="EMBL" id="CP000422">
    <property type="protein sequence ID" value="ABJ68836.1"/>
    <property type="molecule type" value="Genomic_DNA"/>
</dbReference>
<dbReference type="RefSeq" id="WP_011673905.1">
    <property type="nucleotide sequence ID" value="NC_008525.1"/>
</dbReference>
<dbReference type="SMR" id="Q03D86"/>
<dbReference type="STRING" id="278197.PEPE_1817"/>
<dbReference type="GeneID" id="33062940"/>
<dbReference type="KEGG" id="ppe:PEPE_1817"/>
<dbReference type="eggNOG" id="COG0054">
    <property type="taxonomic scope" value="Bacteria"/>
</dbReference>
<dbReference type="HOGENOM" id="CLU_089358_1_1_9"/>
<dbReference type="OrthoDB" id="9809709at2"/>
<dbReference type="UniPathway" id="UPA00275">
    <property type="reaction ID" value="UER00404"/>
</dbReference>
<dbReference type="Proteomes" id="UP000000773">
    <property type="component" value="Chromosome"/>
</dbReference>
<dbReference type="GO" id="GO:0005829">
    <property type="term" value="C:cytosol"/>
    <property type="evidence" value="ECO:0007669"/>
    <property type="project" value="TreeGrafter"/>
</dbReference>
<dbReference type="GO" id="GO:0009349">
    <property type="term" value="C:riboflavin synthase complex"/>
    <property type="evidence" value="ECO:0007669"/>
    <property type="project" value="InterPro"/>
</dbReference>
<dbReference type="GO" id="GO:0000906">
    <property type="term" value="F:6,7-dimethyl-8-ribityllumazine synthase activity"/>
    <property type="evidence" value="ECO:0007669"/>
    <property type="project" value="UniProtKB-UniRule"/>
</dbReference>
<dbReference type="GO" id="GO:0009231">
    <property type="term" value="P:riboflavin biosynthetic process"/>
    <property type="evidence" value="ECO:0007669"/>
    <property type="project" value="UniProtKB-UniRule"/>
</dbReference>
<dbReference type="CDD" id="cd09209">
    <property type="entry name" value="Lumazine_synthase-I"/>
    <property type="match status" value="1"/>
</dbReference>
<dbReference type="FunFam" id="3.40.50.960:FF:000001">
    <property type="entry name" value="6,7-dimethyl-8-ribityllumazine synthase"/>
    <property type="match status" value="1"/>
</dbReference>
<dbReference type="Gene3D" id="3.40.50.960">
    <property type="entry name" value="Lumazine/riboflavin synthase"/>
    <property type="match status" value="1"/>
</dbReference>
<dbReference type="HAMAP" id="MF_00178">
    <property type="entry name" value="Lumazine_synth"/>
    <property type="match status" value="1"/>
</dbReference>
<dbReference type="InterPro" id="IPR034964">
    <property type="entry name" value="LS"/>
</dbReference>
<dbReference type="InterPro" id="IPR002180">
    <property type="entry name" value="LS/RS"/>
</dbReference>
<dbReference type="InterPro" id="IPR036467">
    <property type="entry name" value="LS/RS_sf"/>
</dbReference>
<dbReference type="NCBIfam" id="TIGR00114">
    <property type="entry name" value="lumazine-synth"/>
    <property type="match status" value="1"/>
</dbReference>
<dbReference type="PANTHER" id="PTHR21058:SF0">
    <property type="entry name" value="6,7-DIMETHYL-8-RIBITYLLUMAZINE SYNTHASE"/>
    <property type="match status" value="1"/>
</dbReference>
<dbReference type="PANTHER" id="PTHR21058">
    <property type="entry name" value="6,7-DIMETHYL-8-RIBITYLLUMAZINE SYNTHASE DMRL SYNTHASE LUMAZINE SYNTHASE"/>
    <property type="match status" value="1"/>
</dbReference>
<dbReference type="Pfam" id="PF00885">
    <property type="entry name" value="DMRL_synthase"/>
    <property type="match status" value="1"/>
</dbReference>
<dbReference type="SUPFAM" id="SSF52121">
    <property type="entry name" value="Lumazine synthase"/>
    <property type="match status" value="1"/>
</dbReference>
<gene>
    <name evidence="1" type="primary">ribH</name>
    <name type="ordered locus">PEPE_1817</name>
</gene>
<proteinExistence type="inferred from homology"/>
<comment type="function">
    <text evidence="1">Catalyzes the formation of 6,7-dimethyl-8-ribityllumazine by condensation of 5-amino-6-(D-ribitylamino)uracil with 3,4-dihydroxy-2-butanone 4-phosphate. This is the penultimate step in the biosynthesis of riboflavin.</text>
</comment>
<comment type="catalytic activity">
    <reaction evidence="1">
        <text>(2S)-2-hydroxy-3-oxobutyl phosphate + 5-amino-6-(D-ribitylamino)uracil = 6,7-dimethyl-8-(1-D-ribityl)lumazine + phosphate + 2 H2O + H(+)</text>
        <dbReference type="Rhea" id="RHEA:26152"/>
        <dbReference type="ChEBI" id="CHEBI:15377"/>
        <dbReference type="ChEBI" id="CHEBI:15378"/>
        <dbReference type="ChEBI" id="CHEBI:15934"/>
        <dbReference type="ChEBI" id="CHEBI:43474"/>
        <dbReference type="ChEBI" id="CHEBI:58201"/>
        <dbReference type="ChEBI" id="CHEBI:58830"/>
        <dbReference type="EC" id="2.5.1.78"/>
    </reaction>
</comment>
<comment type="pathway">
    <text evidence="1">Cofactor biosynthesis; riboflavin biosynthesis; riboflavin from 2-hydroxy-3-oxobutyl phosphate and 5-amino-6-(D-ribitylamino)uracil: step 1/2.</text>
</comment>
<comment type="similarity">
    <text evidence="1">Belongs to the DMRL synthase family.</text>
</comment>
<sequence length="156" mass="16751">MTEYLGTFNGSKLKIAIIVARFNDLVTKRLLDGAFQTLAQNGVSKEDIDIYWVPGAFEIPRVAQKISQKGNVDGIITLGAVVRGETSHYESVCSGVTSGIAQIALEGKVPVMFGVLMTENMEQALNRAGGKAGNKGSECATGLLEMIDIEQTIDRE</sequence>
<organism>
    <name type="scientific">Pediococcus pentosaceus (strain ATCC 25745 / CCUG 21536 / LMG 10740 / 183-1w)</name>
    <dbReference type="NCBI Taxonomy" id="278197"/>
    <lineage>
        <taxon>Bacteria</taxon>
        <taxon>Bacillati</taxon>
        <taxon>Bacillota</taxon>
        <taxon>Bacilli</taxon>
        <taxon>Lactobacillales</taxon>
        <taxon>Lactobacillaceae</taxon>
        <taxon>Pediococcus</taxon>
    </lineage>
</organism>
<name>RISB_PEDPA</name>
<protein>
    <recommendedName>
        <fullName evidence="1">6,7-dimethyl-8-ribityllumazine synthase</fullName>
        <shortName evidence="1">DMRL synthase</shortName>
        <shortName evidence="1">LS</shortName>
        <shortName evidence="1">Lumazine synthase</shortName>
        <ecNumber evidence="1">2.5.1.78</ecNumber>
    </recommendedName>
</protein>